<proteinExistence type="inferred from homology"/>
<feature type="chain" id="PRO_1000203965" description="Glycerol kinase">
    <location>
        <begin position="1"/>
        <end position="493"/>
    </location>
</feature>
<feature type="binding site" evidence="1">
    <location>
        <position position="12"/>
    </location>
    <ligand>
        <name>ADP</name>
        <dbReference type="ChEBI" id="CHEBI:456216"/>
    </ligand>
</feature>
<feature type="binding site" evidence="1">
    <location>
        <position position="12"/>
    </location>
    <ligand>
        <name>ATP</name>
        <dbReference type="ChEBI" id="CHEBI:30616"/>
    </ligand>
</feature>
<feature type="binding site" evidence="1">
    <location>
        <position position="12"/>
    </location>
    <ligand>
        <name>sn-glycerol 3-phosphate</name>
        <dbReference type="ChEBI" id="CHEBI:57597"/>
    </ligand>
</feature>
<feature type="binding site" evidence="1">
    <location>
        <position position="13"/>
    </location>
    <ligand>
        <name>ATP</name>
        <dbReference type="ChEBI" id="CHEBI:30616"/>
    </ligand>
</feature>
<feature type="binding site" evidence="1">
    <location>
        <position position="14"/>
    </location>
    <ligand>
        <name>ATP</name>
        <dbReference type="ChEBI" id="CHEBI:30616"/>
    </ligand>
</feature>
<feature type="binding site" evidence="1">
    <location>
        <position position="16"/>
    </location>
    <ligand>
        <name>ADP</name>
        <dbReference type="ChEBI" id="CHEBI:456216"/>
    </ligand>
</feature>
<feature type="binding site" evidence="1">
    <location>
        <position position="82"/>
    </location>
    <ligand>
        <name>glycerol</name>
        <dbReference type="ChEBI" id="CHEBI:17754"/>
    </ligand>
</feature>
<feature type="binding site" evidence="1">
    <location>
        <position position="82"/>
    </location>
    <ligand>
        <name>sn-glycerol 3-phosphate</name>
        <dbReference type="ChEBI" id="CHEBI:57597"/>
    </ligand>
</feature>
<feature type="binding site" evidence="1">
    <location>
        <position position="83"/>
    </location>
    <ligand>
        <name>glycerol</name>
        <dbReference type="ChEBI" id="CHEBI:17754"/>
    </ligand>
</feature>
<feature type="binding site" evidence="1">
    <location>
        <position position="83"/>
    </location>
    <ligand>
        <name>sn-glycerol 3-phosphate</name>
        <dbReference type="ChEBI" id="CHEBI:57597"/>
    </ligand>
</feature>
<feature type="binding site" evidence="1">
    <location>
        <position position="132"/>
    </location>
    <ligand>
        <name>glycerol</name>
        <dbReference type="ChEBI" id="CHEBI:17754"/>
    </ligand>
</feature>
<feature type="binding site" evidence="1">
    <location>
        <position position="132"/>
    </location>
    <ligand>
        <name>sn-glycerol 3-phosphate</name>
        <dbReference type="ChEBI" id="CHEBI:57597"/>
    </ligand>
</feature>
<feature type="binding site" evidence="1">
    <location>
        <position position="239"/>
    </location>
    <ligand>
        <name>glycerol</name>
        <dbReference type="ChEBI" id="CHEBI:17754"/>
    </ligand>
</feature>
<feature type="binding site" evidence="1">
    <location>
        <position position="239"/>
    </location>
    <ligand>
        <name>sn-glycerol 3-phosphate</name>
        <dbReference type="ChEBI" id="CHEBI:57597"/>
    </ligand>
</feature>
<feature type="binding site" evidence="1">
    <location>
        <position position="240"/>
    </location>
    <ligand>
        <name>glycerol</name>
        <dbReference type="ChEBI" id="CHEBI:17754"/>
    </ligand>
</feature>
<feature type="binding site" evidence="1">
    <location>
        <position position="261"/>
    </location>
    <ligand>
        <name>ADP</name>
        <dbReference type="ChEBI" id="CHEBI:456216"/>
    </ligand>
</feature>
<feature type="binding site" evidence="1">
    <location>
        <position position="261"/>
    </location>
    <ligand>
        <name>ATP</name>
        <dbReference type="ChEBI" id="CHEBI:30616"/>
    </ligand>
</feature>
<feature type="binding site" evidence="1">
    <location>
        <position position="303"/>
    </location>
    <ligand>
        <name>ADP</name>
        <dbReference type="ChEBI" id="CHEBI:456216"/>
    </ligand>
</feature>
<feature type="binding site" evidence="1">
    <location>
        <position position="303"/>
    </location>
    <ligand>
        <name>ATP</name>
        <dbReference type="ChEBI" id="CHEBI:30616"/>
    </ligand>
</feature>
<feature type="binding site" evidence="1">
    <location>
        <position position="307"/>
    </location>
    <ligand>
        <name>ATP</name>
        <dbReference type="ChEBI" id="CHEBI:30616"/>
    </ligand>
</feature>
<feature type="binding site" evidence="1">
    <location>
        <position position="402"/>
    </location>
    <ligand>
        <name>ADP</name>
        <dbReference type="ChEBI" id="CHEBI:456216"/>
    </ligand>
</feature>
<feature type="binding site" evidence="1">
    <location>
        <position position="402"/>
    </location>
    <ligand>
        <name>ATP</name>
        <dbReference type="ChEBI" id="CHEBI:30616"/>
    </ligand>
</feature>
<feature type="binding site" evidence="1">
    <location>
        <position position="406"/>
    </location>
    <ligand>
        <name>ADP</name>
        <dbReference type="ChEBI" id="CHEBI:456216"/>
    </ligand>
</feature>
<protein>
    <recommendedName>
        <fullName evidence="1">Glycerol kinase</fullName>
        <ecNumber evidence="1">2.7.1.30</ecNumber>
    </recommendedName>
    <alternativeName>
        <fullName evidence="1">ATP:glycerol 3-phosphotransferase</fullName>
    </alternativeName>
    <alternativeName>
        <fullName evidence="1">Glycerokinase</fullName>
        <shortName evidence="1">GK</shortName>
    </alternativeName>
</protein>
<organism>
    <name type="scientific">Thermococcus gammatolerans (strain DSM 15229 / JCM 11827 / EJ3)</name>
    <dbReference type="NCBI Taxonomy" id="593117"/>
    <lineage>
        <taxon>Archaea</taxon>
        <taxon>Methanobacteriati</taxon>
        <taxon>Methanobacteriota</taxon>
        <taxon>Thermococci</taxon>
        <taxon>Thermococcales</taxon>
        <taxon>Thermococcaceae</taxon>
        <taxon>Thermococcus</taxon>
    </lineage>
</organism>
<reference key="1">
    <citation type="journal article" date="2007" name="Genome Biol.">
        <title>Genome analysis and genome-wide proteomics of Thermococcus gammatolerans, the most radioresistant organism known amongst the Archaea.</title>
        <authorList>
            <person name="Zivanovic Y."/>
            <person name="Armengaud J."/>
            <person name="Lagorce A."/>
            <person name="Leplat C."/>
            <person name="Guerin P."/>
            <person name="Dutertre M."/>
            <person name="Anthouard V."/>
            <person name="Forterre P."/>
            <person name="Wincker P."/>
            <person name="Confalonieri F."/>
        </authorList>
    </citation>
    <scope>NUCLEOTIDE SEQUENCE [LARGE SCALE GENOMIC DNA]</scope>
    <source>
        <strain>DSM 15229 / JCM 11827 / EJ3</strain>
    </source>
</reference>
<gene>
    <name evidence="1" type="primary">glpK</name>
    <name type="ordered locus">TGAM_1790</name>
</gene>
<accession>C5A1M3</accession>
<keyword id="KW-0067">ATP-binding</keyword>
<keyword id="KW-0319">Glycerol metabolism</keyword>
<keyword id="KW-0418">Kinase</keyword>
<keyword id="KW-0547">Nucleotide-binding</keyword>
<keyword id="KW-1185">Reference proteome</keyword>
<keyword id="KW-0808">Transferase</keyword>
<dbReference type="EC" id="2.7.1.30" evidence="1"/>
<dbReference type="EMBL" id="CP001398">
    <property type="protein sequence ID" value="ACS34292.1"/>
    <property type="molecule type" value="Genomic_DNA"/>
</dbReference>
<dbReference type="RefSeq" id="WP_015859401.1">
    <property type="nucleotide sequence ID" value="NC_012804.1"/>
</dbReference>
<dbReference type="SMR" id="C5A1M3"/>
<dbReference type="STRING" id="593117.TGAM_1790"/>
<dbReference type="PaxDb" id="593117-TGAM_1790"/>
<dbReference type="GeneID" id="7987617"/>
<dbReference type="KEGG" id="tga:TGAM_1790"/>
<dbReference type="PATRIC" id="fig|593117.10.peg.1798"/>
<dbReference type="eggNOG" id="arCOG00024">
    <property type="taxonomic scope" value="Archaea"/>
</dbReference>
<dbReference type="HOGENOM" id="CLU_009281_2_3_2"/>
<dbReference type="OrthoDB" id="26592at2157"/>
<dbReference type="UniPathway" id="UPA00618">
    <property type="reaction ID" value="UER00672"/>
</dbReference>
<dbReference type="Proteomes" id="UP000001488">
    <property type="component" value="Chromosome"/>
</dbReference>
<dbReference type="GO" id="GO:0005829">
    <property type="term" value="C:cytosol"/>
    <property type="evidence" value="ECO:0007669"/>
    <property type="project" value="TreeGrafter"/>
</dbReference>
<dbReference type="GO" id="GO:0005524">
    <property type="term" value="F:ATP binding"/>
    <property type="evidence" value="ECO:0007669"/>
    <property type="project" value="UniProtKB-UniRule"/>
</dbReference>
<dbReference type="GO" id="GO:0004370">
    <property type="term" value="F:glycerol kinase activity"/>
    <property type="evidence" value="ECO:0000250"/>
    <property type="project" value="UniProtKB"/>
</dbReference>
<dbReference type="GO" id="GO:0019563">
    <property type="term" value="P:glycerol catabolic process"/>
    <property type="evidence" value="ECO:0007669"/>
    <property type="project" value="UniProtKB-UniRule"/>
</dbReference>
<dbReference type="GO" id="GO:0006071">
    <property type="term" value="P:glycerol metabolic process"/>
    <property type="evidence" value="ECO:0000250"/>
    <property type="project" value="UniProtKB"/>
</dbReference>
<dbReference type="GO" id="GO:0006072">
    <property type="term" value="P:glycerol-3-phosphate metabolic process"/>
    <property type="evidence" value="ECO:0007669"/>
    <property type="project" value="InterPro"/>
</dbReference>
<dbReference type="CDD" id="cd07786">
    <property type="entry name" value="FGGY_EcGK_like"/>
    <property type="match status" value="1"/>
</dbReference>
<dbReference type="FunFam" id="3.30.420.40:FF:000007">
    <property type="entry name" value="Glycerol kinase"/>
    <property type="match status" value="1"/>
</dbReference>
<dbReference type="FunFam" id="3.30.420.40:FF:000008">
    <property type="entry name" value="Glycerol kinase"/>
    <property type="match status" value="1"/>
</dbReference>
<dbReference type="Gene3D" id="3.30.420.40">
    <property type="match status" value="2"/>
</dbReference>
<dbReference type="HAMAP" id="MF_00186">
    <property type="entry name" value="Glycerol_kin"/>
    <property type="match status" value="1"/>
</dbReference>
<dbReference type="InterPro" id="IPR043129">
    <property type="entry name" value="ATPase_NBD"/>
</dbReference>
<dbReference type="InterPro" id="IPR000577">
    <property type="entry name" value="Carb_kinase_FGGY"/>
</dbReference>
<dbReference type="InterPro" id="IPR018483">
    <property type="entry name" value="Carb_kinase_FGGY_CS"/>
</dbReference>
<dbReference type="InterPro" id="IPR018485">
    <property type="entry name" value="FGGY_C"/>
</dbReference>
<dbReference type="InterPro" id="IPR018484">
    <property type="entry name" value="FGGY_N"/>
</dbReference>
<dbReference type="InterPro" id="IPR005999">
    <property type="entry name" value="Glycerol_kin"/>
</dbReference>
<dbReference type="NCBIfam" id="TIGR01311">
    <property type="entry name" value="glycerol_kin"/>
    <property type="match status" value="1"/>
</dbReference>
<dbReference type="NCBIfam" id="NF000756">
    <property type="entry name" value="PRK00047.1"/>
    <property type="match status" value="1"/>
</dbReference>
<dbReference type="PANTHER" id="PTHR10196:SF69">
    <property type="entry name" value="GLYCEROL KINASE"/>
    <property type="match status" value="1"/>
</dbReference>
<dbReference type="PANTHER" id="PTHR10196">
    <property type="entry name" value="SUGAR KINASE"/>
    <property type="match status" value="1"/>
</dbReference>
<dbReference type="Pfam" id="PF02782">
    <property type="entry name" value="FGGY_C"/>
    <property type="match status" value="1"/>
</dbReference>
<dbReference type="Pfam" id="PF00370">
    <property type="entry name" value="FGGY_N"/>
    <property type="match status" value="1"/>
</dbReference>
<dbReference type="PIRSF" id="PIRSF000538">
    <property type="entry name" value="GlpK"/>
    <property type="match status" value="1"/>
</dbReference>
<dbReference type="SUPFAM" id="SSF53067">
    <property type="entry name" value="Actin-like ATPase domain"/>
    <property type="match status" value="2"/>
</dbReference>
<dbReference type="PROSITE" id="PS00933">
    <property type="entry name" value="FGGY_KINASES_1"/>
    <property type="match status" value="1"/>
</dbReference>
<dbReference type="PROSITE" id="PS00445">
    <property type="entry name" value="FGGY_KINASES_2"/>
    <property type="match status" value="1"/>
</dbReference>
<comment type="function">
    <text evidence="1">Key enzyme in the regulation of glycerol uptake and metabolism. Catalyzes the phosphorylation of glycerol to yield sn-glycerol 3-phosphate.</text>
</comment>
<comment type="catalytic activity">
    <reaction evidence="1">
        <text>glycerol + ATP = sn-glycerol 3-phosphate + ADP + H(+)</text>
        <dbReference type="Rhea" id="RHEA:21644"/>
        <dbReference type="ChEBI" id="CHEBI:15378"/>
        <dbReference type="ChEBI" id="CHEBI:17754"/>
        <dbReference type="ChEBI" id="CHEBI:30616"/>
        <dbReference type="ChEBI" id="CHEBI:57597"/>
        <dbReference type="ChEBI" id="CHEBI:456216"/>
        <dbReference type="EC" id="2.7.1.30"/>
    </reaction>
</comment>
<comment type="pathway">
    <text evidence="1">Polyol metabolism; glycerol degradation via glycerol kinase pathway; sn-glycerol 3-phosphate from glycerol: step 1/1.</text>
</comment>
<comment type="similarity">
    <text evidence="1">Belongs to the FGGY kinase family.</text>
</comment>
<evidence type="ECO:0000255" key="1">
    <source>
        <dbReference type="HAMAP-Rule" id="MF_00186"/>
    </source>
</evidence>
<sequence>MERYVLSLDEGTTSARAIIFDRESNIIGLGQYEFPQHYPKPGWVEHNPEEIWDAQFRAIKTALERAKVEPSQIAAIGVTNQRETTIVFDRDGKPLYNAIVWQCRRTAEMVEEIKREYGDMIKGKTGLVPDAYFSASKLKWLLDNVPGLREKAEKGEVLFGTVDTFLIYRLTGEHVTDYSNASRTMLFNIKRLDWDDELLEIFGIPEGILPEVRESSEVYGYTKKELLGAEIPVSGDAGDQQAALFGQAGFETGMVKATYGTGSFILANTGKTVRYSDNLLTTIAWGLNGKVTYALEGSIFVTGAAVQWLRDGIKIIKKASETEELATKLESNEGVYFVPAFVGLGAPYWDQFARGLIIGITRGTGREHLARATLEAIAYLTRDVIEEMEKLVGIKELRVDGGATANDFLMQFQADILNRRVVRPVVKETTALGAAYLAGLAVDYWESLEEIESLWKVEKVFEPGMDEETRRKLYHGWKEAVKRAMGWAKVVGI</sequence>
<name>GLPK_THEGJ</name>